<comment type="function">
    <text evidence="1">Succinyl-CoA synthetase functions in the citric acid cycle (TCA), coupling the hydrolysis of succinyl-CoA to the synthesis of either ATP or GTP and thus represents the only step of substrate-level phosphorylation in the TCA. The beta subunit provides nucleotide specificity of the enzyme and binds the substrate succinate, while the binding sites for coenzyme A and phosphate are found in the alpha subunit.</text>
</comment>
<comment type="catalytic activity">
    <reaction evidence="1">
        <text>succinate + ATP + CoA = succinyl-CoA + ADP + phosphate</text>
        <dbReference type="Rhea" id="RHEA:17661"/>
        <dbReference type="ChEBI" id="CHEBI:30031"/>
        <dbReference type="ChEBI" id="CHEBI:30616"/>
        <dbReference type="ChEBI" id="CHEBI:43474"/>
        <dbReference type="ChEBI" id="CHEBI:57287"/>
        <dbReference type="ChEBI" id="CHEBI:57292"/>
        <dbReference type="ChEBI" id="CHEBI:456216"/>
        <dbReference type="EC" id="6.2.1.5"/>
    </reaction>
    <physiologicalReaction direction="right-to-left" evidence="1">
        <dbReference type="Rhea" id="RHEA:17663"/>
    </physiologicalReaction>
</comment>
<comment type="catalytic activity">
    <reaction evidence="1">
        <text>GTP + succinate + CoA = succinyl-CoA + GDP + phosphate</text>
        <dbReference type="Rhea" id="RHEA:22120"/>
        <dbReference type="ChEBI" id="CHEBI:30031"/>
        <dbReference type="ChEBI" id="CHEBI:37565"/>
        <dbReference type="ChEBI" id="CHEBI:43474"/>
        <dbReference type="ChEBI" id="CHEBI:57287"/>
        <dbReference type="ChEBI" id="CHEBI:57292"/>
        <dbReference type="ChEBI" id="CHEBI:58189"/>
    </reaction>
    <physiologicalReaction direction="right-to-left" evidence="1">
        <dbReference type="Rhea" id="RHEA:22122"/>
    </physiologicalReaction>
</comment>
<comment type="cofactor">
    <cofactor evidence="1">
        <name>Mg(2+)</name>
        <dbReference type="ChEBI" id="CHEBI:18420"/>
    </cofactor>
    <text evidence="1">Binds 1 Mg(2+) ion per subunit.</text>
</comment>
<comment type="pathway">
    <text evidence="1">Carbohydrate metabolism; tricarboxylic acid cycle; succinate from succinyl-CoA (ligase route): step 1/1.</text>
</comment>
<comment type="subunit">
    <text evidence="1">Heterotetramer of two alpha and two beta subunits.</text>
</comment>
<comment type="similarity">
    <text evidence="1">Belongs to the succinate/malate CoA ligase beta subunit family.</text>
</comment>
<proteinExistence type="inferred from homology"/>
<feature type="chain" id="PRO_0000102849" description="Succinate--CoA ligase [ADP-forming] subunit beta">
    <location>
        <begin position="1"/>
        <end position="386"/>
    </location>
</feature>
<feature type="domain" description="ATP-grasp" evidence="1">
    <location>
        <begin position="9"/>
        <end position="244"/>
    </location>
</feature>
<feature type="binding site" evidence="1">
    <location>
        <position position="46"/>
    </location>
    <ligand>
        <name>ATP</name>
        <dbReference type="ChEBI" id="CHEBI:30616"/>
    </ligand>
</feature>
<feature type="binding site" evidence="1">
    <location>
        <begin position="53"/>
        <end position="55"/>
    </location>
    <ligand>
        <name>ATP</name>
        <dbReference type="ChEBI" id="CHEBI:30616"/>
    </ligand>
</feature>
<feature type="binding site" evidence="1">
    <location>
        <position position="99"/>
    </location>
    <ligand>
        <name>ATP</name>
        <dbReference type="ChEBI" id="CHEBI:30616"/>
    </ligand>
</feature>
<feature type="binding site" evidence="1">
    <location>
        <position position="102"/>
    </location>
    <ligand>
        <name>ATP</name>
        <dbReference type="ChEBI" id="CHEBI:30616"/>
    </ligand>
</feature>
<feature type="binding site" evidence="1">
    <location>
        <position position="107"/>
    </location>
    <ligand>
        <name>ATP</name>
        <dbReference type="ChEBI" id="CHEBI:30616"/>
    </ligand>
</feature>
<feature type="binding site" evidence="1">
    <location>
        <position position="199"/>
    </location>
    <ligand>
        <name>Mg(2+)</name>
        <dbReference type="ChEBI" id="CHEBI:18420"/>
    </ligand>
</feature>
<feature type="binding site" evidence="1">
    <location>
        <position position="213"/>
    </location>
    <ligand>
        <name>Mg(2+)</name>
        <dbReference type="ChEBI" id="CHEBI:18420"/>
    </ligand>
</feature>
<feature type="binding site" evidence="1">
    <location>
        <position position="264"/>
    </location>
    <ligand>
        <name>substrate</name>
        <note>ligand shared with subunit alpha</note>
    </ligand>
</feature>
<feature type="binding site" evidence="1">
    <location>
        <begin position="321"/>
        <end position="323"/>
    </location>
    <ligand>
        <name>substrate</name>
        <note>ligand shared with subunit alpha</note>
    </ligand>
</feature>
<accession>Q4ULQ7</accession>
<organism>
    <name type="scientific">Rickettsia felis (strain ATCC VR-1525 / URRWXCal2)</name>
    <name type="common">Rickettsia azadi</name>
    <dbReference type="NCBI Taxonomy" id="315456"/>
    <lineage>
        <taxon>Bacteria</taxon>
        <taxon>Pseudomonadati</taxon>
        <taxon>Pseudomonadota</taxon>
        <taxon>Alphaproteobacteria</taxon>
        <taxon>Rickettsiales</taxon>
        <taxon>Rickettsiaceae</taxon>
        <taxon>Rickettsieae</taxon>
        <taxon>Rickettsia</taxon>
        <taxon>spotted fever group</taxon>
    </lineage>
</organism>
<keyword id="KW-0067">ATP-binding</keyword>
<keyword id="KW-0436">Ligase</keyword>
<keyword id="KW-0460">Magnesium</keyword>
<keyword id="KW-0479">Metal-binding</keyword>
<keyword id="KW-0547">Nucleotide-binding</keyword>
<keyword id="KW-0816">Tricarboxylic acid cycle</keyword>
<name>SUCC_RICFE</name>
<gene>
    <name evidence="1" type="primary">sucC</name>
    <name type="ordered locus">RF_0665</name>
</gene>
<sequence length="386" mass="41903">MNIHEYQAKEILRKYGVPTSTGLVVTKTEKINETIDKLNTEVYVVKAQIHAGGRGKAGGVKVVKSKEEAKKVAHDMFGINLVTHQTGPQGQKVNRLYIESGCDILKEYYFSIVFDRLASCITFIASTEGGVDIEEVAEKTPEKIVKFSVDPATGLQDFHMRGIAYELGFKDNQAKQMKEIVKSVYNAFVETDAAQIEINPLIVQTDGNLLALDAKITFDDNGLFKHPNITAMRDHDEEDPLETRAANAGLSYVKMDGNIGCMVNGAGLAMATMDIIKLYGASPANFLDVGGGADRERVKEALKIILSDKEVQGILVNIFGGIMRCDIIAEGIIAAAKDIGIKVPLVVRLAGTNVEKGKEILSNSGLEIIPAHDLADAANKIVEAIR</sequence>
<reference key="1">
    <citation type="journal article" date="2005" name="PLoS Biol.">
        <title>The genome sequence of Rickettsia felis identifies the first putative conjugative plasmid in an obligate intracellular parasite.</title>
        <authorList>
            <person name="Ogata H."/>
            <person name="Renesto P."/>
            <person name="Audic S."/>
            <person name="Robert C."/>
            <person name="Blanc G."/>
            <person name="Fournier P.-E."/>
            <person name="Parinello H."/>
            <person name="Claverie J.-M."/>
            <person name="Raoult D."/>
        </authorList>
    </citation>
    <scope>NUCLEOTIDE SEQUENCE [LARGE SCALE GENOMIC DNA]</scope>
    <source>
        <strain>ATCC VR-1525 / URRWXCal2</strain>
    </source>
</reference>
<evidence type="ECO:0000255" key="1">
    <source>
        <dbReference type="HAMAP-Rule" id="MF_00558"/>
    </source>
</evidence>
<protein>
    <recommendedName>
        <fullName evidence="1">Succinate--CoA ligase [ADP-forming] subunit beta</fullName>
        <ecNumber evidence="1">6.2.1.5</ecNumber>
    </recommendedName>
    <alternativeName>
        <fullName evidence="1">Succinyl-CoA synthetase subunit beta</fullName>
        <shortName evidence="1">SCS-beta</shortName>
    </alternativeName>
</protein>
<dbReference type="EC" id="6.2.1.5" evidence="1"/>
<dbReference type="EMBL" id="CP000053">
    <property type="protein sequence ID" value="AAY61516.1"/>
    <property type="molecule type" value="Genomic_DNA"/>
</dbReference>
<dbReference type="SMR" id="Q4ULQ7"/>
<dbReference type="STRING" id="315456.RF_0665"/>
<dbReference type="KEGG" id="rfe:RF_0665"/>
<dbReference type="eggNOG" id="COG0045">
    <property type="taxonomic scope" value="Bacteria"/>
</dbReference>
<dbReference type="HOGENOM" id="CLU_037430_0_2_5"/>
<dbReference type="OrthoDB" id="9802602at2"/>
<dbReference type="UniPathway" id="UPA00223">
    <property type="reaction ID" value="UER00999"/>
</dbReference>
<dbReference type="Proteomes" id="UP000008548">
    <property type="component" value="Chromosome"/>
</dbReference>
<dbReference type="GO" id="GO:0005829">
    <property type="term" value="C:cytosol"/>
    <property type="evidence" value="ECO:0007669"/>
    <property type="project" value="TreeGrafter"/>
</dbReference>
<dbReference type="GO" id="GO:0042709">
    <property type="term" value="C:succinate-CoA ligase complex"/>
    <property type="evidence" value="ECO:0007669"/>
    <property type="project" value="TreeGrafter"/>
</dbReference>
<dbReference type="GO" id="GO:0005524">
    <property type="term" value="F:ATP binding"/>
    <property type="evidence" value="ECO:0007669"/>
    <property type="project" value="UniProtKB-UniRule"/>
</dbReference>
<dbReference type="GO" id="GO:0000287">
    <property type="term" value="F:magnesium ion binding"/>
    <property type="evidence" value="ECO:0007669"/>
    <property type="project" value="UniProtKB-UniRule"/>
</dbReference>
<dbReference type="GO" id="GO:0004775">
    <property type="term" value="F:succinate-CoA ligase (ADP-forming) activity"/>
    <property type="evidence" value="ECO:0007669"/>
    <property type="project" value="UniProtKB-UniRule"/>
</dbReference>
<dbReference type="GO" id="GO:0004776">
    <property type="term" value="F:succinate-CoA ligase (GDP-forming) activity"/>
    <property type="evidence" value="ECO:0007669"/>
    <property type="project" value="RHEA"/>
</dbReference>
<dbReference type="GO" id="GO:0006104">
    <property type="term" value="P:succinyl-CoA metabolic process"/>
    <property type="evidence" value="ECO:0007669"/>
    <property type="project" value="TreeGrafter"/>
</dbReference>
<dbReference type="GO" id="GO:0006099">
    <property type="term" value="P:tricarboxylic acid cycle"/>
    <property type="evidence" value="ECO:0007669"/>
    <property type="project" value="UniProtKB-UniRule"/>
</dbReference>
<dbReference type="FunFam" id="3.30.1490.20:FF:000002">
    <property type="entry name" value="Succinate--CoA ligase [ADP-forming] subunit beta"/>
    <property type="match status" value="1"/>
</dbReference>
<dbReference type="FunFam" id="3.30.470.20:FF:000002">
    <property type="entry name" value="Succinate--CoA ligase [ADP-forming] subunit beta"/>
    <property type="match status" value="1"/>
</dbReference>
<dbReference type="FunFam" id="3.40.50.261:FF:000001">
    <property type="entry name" value="Succinate--CoA ligase [ADP-forming] subunit beta"/>
    <property type="match status" value="1"/>
</dbReference>
<dbReference type="Gene3D" id="3.30.1490.20">
    <property type="entry name" value="ATP-grasp fold, A domain"/>
    <property type="match status" value="1"/>
</dbReference>
<dbReference type="Gene3D" id="3.30.470.20">
    <property type="entry name" value="ATP-grasp fold, B domain"/>
    <property type="match status" value="1"/>
</dbReference>
<dbReference type="Gene3D" id="3.40.50.261">
    <property type="entry name" value="Succinyl-CoA synthetase domains"/>
    <property type="match status" value="1"/>
</dbReference>
<dbReference type="HAMAP" id="MF_00558">
    <property type="entry name" value="Succ_CoA_beta"/>
    <property type="match status" value="1"/>
</dbReference>
<dbReference type="InterPro" id="IPR011761">
    <property type="entry name" value="ATP-grasp"/>
</dbReference>
<dbReference type="InterPro" id="IPR013650">
    <property type="entry name" value="ATP-grasp_succ-CoA_synth-type"/>
</dbReference>
<dbReference type="InterPro" id="IPR013815">
    <property type="entry name" value="ATP_grasp_subdomain_1"/>
</dbReference>
<dbReference type="InterPro" id="IPR017866">
    <property type="entry name" value="Succ-CoA_synthase_bsu_CS"/>
</dbReference>
<dbReference type="InterPro" id="IPR005811">
    <property type="entry name" value="SUCC_ACL_C"/>
</dbReference>
<dbReference type="InterPro" id="IPR005809">
    <property type="entry name" value="Succ_CoA_ligase-like_bsu"/>
</dbReference>
<dbReference type="InterPro" id="IPR016102">
    <property type="entry name" value="Succinyl-CoA_synth-like"/>
</dbReference>
<dbReference type="NCBIfam" id="NF001913">
    <property type="entry name" value="PRK00696.1"/>
    <property type="match status" value="1"/>
</dbReference>
<dbReference type="NCBIfam" id="TIGR01016">
    <property type="entry name" value="sucCoAbeta"/>
    <property type="match status" value="1"/>
</dbReference>
<dbReference type="PANTHER" id="PTHR11815:SF10">
    <property type="entry name" value="SUCCINATE--COA LIGASE [GDP-FORMING] SUBUNIT BETA, MITOCHONDRIAL"/>
    <property type="match status" value="1"/>
</dbReference>
<dbReference type="PANTHER" id="PTHR11815">
    <property type="entry name" value="SUCCINYL-COA SYNTHETASE BETA CHAIN"/>
    <property type="match status" value="1"/>
</dbReference>
<dbReference type="Pfam" id="PF08442">
    <property type="entry name" value="ATP-grasp_2"/>
    <property type="match status" value="1"/>
</dbReference>
<dbReference type="Pfam" id="PF00549">
    <property type="entry name" value="Ligase_CoA"/>
    <property type="match status" value="1"/>
</dbReference>
<dbReference type="PIRSF" id="PIRSF001554">
    <property type="entry name" value="SucCS_beta"/>
    <property type="match status" value="1"/>
</dbReference>
<dbReference type="SUPFAM" id="SSF56059">
    <property type="entry name" value="Glutathione synthetase ATP-binding domain-like"/>
    <property type="match status" value="1"/>
</dbReference>
<dbReference type="SUPFAM" id="SSF52210">
    <property type="entry name" value="Succinyl-CoA synthetase domains"/>
    <property type="match status" value="1"/>
</dbReference>
<dbReference type="PROSITE" id="PS50975">
    <property type="entry name" value="ATP_GRASP"/>
    <property type="match status" value="1"/>
</dbReference>
<dbReference type="PROSITE" id="PS01217">
    <property type="entry name" value="SUCCINYL_COA_LIG_3"/>
    <property type="match status" value="1"/>
</dbReference>